<gene>
    <name evidence="1" type="primary">mraY</name>
    <name type="ordered locus">Adeh_3768</name>
</gene>
<protein>
    <recommendedName>
        <fullName evidence="1">Phospho-N-acetylmuramoyl-pentapeptide-transferase</fullName>
        <ecNumber evidence="1">2.7.8.13</ecNumber>
    </recommendedName>
    <alternativeName>
        <fullName evidence="1">UDP-MurNAc-pentapeptide phosphotransferase</fullName>
    </alternativeName>
</protein>
<keyword id="KW-0131">Cell cycle</keyword>
<keyword id="KW-0132">Cell division</keyword>
<keyword id="KW-0997">Cell inner membrane</keyword>
<keyword id="KW-1003">Cell membrane</keyword>
<keyword id="KW-0133">Cell shape</keyword>
<keyword id="KW-0961">Cell wall biogenesis/degradation</keyword>
<keyword id="KW-0460">Magnesium</keyword>
<keyword id="KW-0472">Membrane</keyword>
<keyword id="KW-0479">Metal-binding</keyword>
<keyword id="KW-0573">Peptidoglycan synthesis</keyword>
<keyword id="KW-1185">Reference proteome</keyword>
<keyword id="KW-0808">Transferase</keyword>
<keyword id="KW-0812">Transmembrane</keyword>
<keyword id="KW-1133">Transmembrane helix</keyword>
<evidence type="ECO:0000255" key="1">
    <source>
        <dbReference type="HAMAP-Rule" id="MF_00038"/>
    </source>
</evidence>
<proteinExistence type="inferred from homology"/>
<comment type="function">
    <text evidence="1">Catalyzes the initial step of the lipid cycle reactions in the biosynthesis of the cell wall peptidoglycan: transfers peptidoglycan precursor phospho-MurNAc-pentapeptide from UDP-MurNAc-pentapeptide onto the lipid carrier undecaprenyl phosphate, yielding undecaprenyl-pyrophosphoryl-MurNAc-pentapeptide, known as lipid I.</text>
</comment>
<comment type="catalytic activity">
    <reaction evidence="1">
        <text>UDP-N-acetyl-alpha-D-muramoyl-L-alanyl-gamma-D-glutamyl-meso-2,6-diaminopimeloyl-D-alanyl-D-alanine + di-trans,octa-cis-undecaprenyl phosphate = di-trans,octa-cis-undecaprenyl diphospho-N-acetyl-alpha-D-muramoyl-L-alanyl-D-glutamyl-meso-2,6-diaminopimeloyl-D-alanyl-D-alanine + UMP</text>
        <dbReference type="Rhea" id="RHEA:28386"/>
        <dbReference type="ChEBI" id="CHEBI:57865"/>
        <dbReference type="ChEBI" id="CHEBI:60392"/>
        <dbReference type="ChEBI" id="CHEBI:61386"/>
        <dbReference type="ChEBI" id="CHEBI:61387"/>
        <dbReference type="EC" id="2.7.8.13"/>
    </reaction>
</comment>
<comment type="cofactor">
    <cofactor evidence="1">
        <name>Mg(2+)</name>
        <dbReference type="ChEBI" id="CHEBI:18420"/>
    </cofactor>
</comment>
<comment type="pathway">
    <text evidence="1">Cell wall biogenesis; peptidoglycan biosynthesis.</text>
</comment>
<comment type="subcellular location">
    <subcellularLocation>
        <location evidence="1">Cell inner membrane</location>
        <topology evidence="1">Multi-pass membrane protein</topology>
    </subcellularLocation>
</comment>
<comment type="similarity">
    <text evidence="1">Belongs to the glycosyltransferase 4 family. MraY subfamily.</text>
</comment>
<reference key="1">
    <citation type="submission" date="2006-01" db="EMBL/GenBank/DDBJ databases">
        <title>Complete sequence of Anaeromyxobacter dehalogenans 2CP-C.</title>
        <authorList>
            <person name="Copeland A."/>
            <person name="Lucas S."/>
            <person name="Lapidus A."/>
            <person name="Barry K."/>
            <person name="Detter J.C."/>
            <person name="Glavina T."/>
            <person name="Hammon N."/>
            <person name="Israni S."/>
            <person name="Pitluck S."/>
            <person name="Brettin T."/>
            <person name="Bruce D."/>
            <person name="Han C."/>
            <person name="Tapia R."/>
            <person name="Gilna P."/>
            <person name="Kiss H."/>
            <person name="Schmutz J."/>
            <person name="Larimer F."/>
            <person name="Land M."/>
            <person name="Kyrpides N."/>
            <person name="Anderson I."/>
            <person name="Sanford R.A."/>
            <person name="Ritalahti K.M."/>
            <person name="Thomas H.S."/>
            <person name="Kirby J.R."/>
            <person name="Zhulin I.B."/>
            <person name="Loeffler F.E."/>
            <person name="Richardson P."/>
        </authorList>
    </citation>
    <scope>NUCLEOTIDE SEQUENCE [LARGE SCALE GENOMIC DNA]</scope>
    <source>
        <strain>2CP-C</strain>
    </source>
</reference>
<name>MRAY_ANADE</name>
<sequence>MLYHLLYPLAYKLSLLNVLRYPSFRIVAAGLTAMVLGLLLGPIFIERMRVLQYGSTNVREDTPDTHKKKAGTPSMGGALILASVAIATLLFADLANRFVWAALLVTLGYGAIGFTDDWLKISKKNSKGLAGKKKLVLQVLVVVVVYYACLTDWRFHVEHRFPWVFVGSYVDLHVTLPFVPSRLFNPDLGFLYLPFMVFVVIATSNAVNLTDGLDGLAIGPTVVSAMTFLALSYVAGATIAGFSLAEYLRVPYIPGAEELGVFCSAIFGAGVAFLWYNTYPASVFMGDVGSLALGGGLGMMAVLTKNEFASAILHGVFLTETVSVILQVWSFKTTGKRIFRMAPIHHHYELKGWAEPKIIVRFWIISVMLALVALLSIKLR</sequence>
<feature type="chain" id="PRO_0000235436" description="Phospho-N-acetylmuramoyl-pentapeptide-transferase">
    <location>
        <begin position="1"/>
        <end position="380"/>
    </location>
</feature>
<feature type="transmembrane region" description="Helical" evidence="1">
    <location>
        <begin position="26"/>
        <end position="46"/>
    </location>
</feature>
<feature type="transmembrane region" description="Helical" evidence="1">
    <location>
        <begin position="75"/>
        <end position="95"/>
    </location>
</feature>
<feature type="transmembrane region" description="Helical" evidence="1">
    <location>
        <begin position="98"/>
        <end position="118"/>
    </location>
</feature>
<feature type="transmembrane region" description="Helical" evidence="1">
    <location>
        <begin position="135"/>
        <end position="155"/>
    </location>
</feature>
<feature type="transmembrane region" description="Helical" evidence="1">
    <location>
        <begin position="161"/>
        <end position="181"/>
    </location>
</feature>
<feature type="transmembrane region" description="Helical" evidence="1">
    <location>
        <begin position="183"/>
        <end position="203"/>
    </location>
</feature>
<feature type="transmembrane region" description="Helical" evidence="1">
    <location>
        <begin position="222"/>
        <end position="242"/>
    </location>
</feature>
<feature type="transmembrane region" description="Helical" evidence="1">
    <location>
        <begin position="259"/>
        <end position="279"/>
    </location>
</feature>
<feature type="transmembrane region" description="Helical" evidence="1">
    <location>
        <begin position="283"/>
        <end position="303"/>
    </location>
</feature>
<feature type="transmembrane region" description="Helical" evidence="1">
    <location>
        <begin position="311"/>
        <end position="331"/>
    </location>
</feature>
<feature type="transmembrane region" description="Helical" evidence="1">
    <location>
        <begin position="357"/>
        <end position="377"/>
    </location>
</feature>
<accession>Q2IG26</accession>
<organism>
    <name type="scientific">Anaeromyxobacter dehalogenans (strain 2CP-C)</name>
    <dbReference type="NCBI Taxonomy" id="290397"/>
    <lineage>
        <taxon>Bacteria</taxon>
        <taxon>Pseudomonadati</taxon>
        <taxon>Myxococcota</taxon>
        <taxon>Myxococcia</taxon>
        <taxon>Myxococcales</taxon>
        <taxon>Cystobacterineae</taxon>
        <taxon>Anaeromyxobacteraceae</taxon>
        <taxon>Anaeromyxobacter</taxon>
    </lineage>
</organism>
<dbReference type="EC" id="2.7.8.13" evidence="1"/>
<dbReference type="EMBL" id="CP000251">
    <property type="protein sequence ID" value="ABC83534.1"/>
    <property type="molecule type" value="Genomic_DNA"/>
</dbReference>
<dbReference type="RefSeq" id="WP_011422816.1">
    <property type="nucleotide sequence ID" value="NC_007760.1"/>
</dbReference>
<dbReference type="SMR" id="Q2IG26"/>
<dbReference type="STRING" id="290397.Adeh_3768"/>
<dbReference type="KEGG" id="ade:Adeh_3768"/>
<dbReference type="eggNOG" id="COG0472">
    <property type="taxonomic scope" value="Bacteria"/>
</dbReference>
<dbReference type="HOGENOM" id="CLU_023982_0_0_7"/>
<dbReference type="OrthoDB" id="9805475at2"/>
<dbReference type="UniPathway" id="UPA00219"/>
<dbReference type="Proteomes" id="UP000001935">
    <property type="component" value="Chromosome"/>
</dbReference>
<dbReference type="GO" id="GO:0005886">
    <property type="term" value="C:plasma membrane"/>
    <property type="evidence" value="ECO:0007669"/>
    <property type="project" value="UniProtKB-SubCell"/>
</dbReference>
<dbReference type="GO" id="GO:0046872">
    <property type="term" value="F:metal ion binding"/>
    <property type="evidence" value="ECO:0007669"/>
    <property type="project" value="UniProtKB-KW"/>
</dbReference>
<dbReference type="GO" id="GO:0008963">
    <property type="term" value="F:phospho-N-acetylmuramoyl-pentapeptide-transferase activity"/>
    <property type="evidence" value="ECO:0007669"/>
    <property type="project" value="UniProtKB-UniRule"/>
</dbReference>
<dbReference type="GO" id="GO:0051992">
    <property type="term" value="F:UDP-N-acetylmuramoyl-L-alanyl-D-glutamyl-meso-2,6-diaminopimelyl-D-alanyl-D-alanine:undecaprenyl-phosphate transferase activity"/>
    <property type="evidence" value="ECO:0007669"/>
    <property type="project" value="RHEA"/>
</dbReference>
<dbReference type="GO" id="GO:0051301">
    <property type="term" value="P:cell division"/>
    <property type="evidence" value="ECO:0007669"/>
    <property type="project" value="UniProtKB-KW"/>
</dbReference>
<dbReference type="GO" id="GO:0071555">
    <property type="term" value="P:cell wall organization"/>
    <property type="evidence" value="ECO:0007669"/>
    <property type="project" value="UniProtKB-KW"/>
</dbReference>
<dbReference type="GO" id="GO:0009252">
    <property type="term" value="P:peptidoglycan biosynthetic process"/>
    <property type="evidence" value="ECO:0007669"/>
    <property type="project" value="UniProtKB-UniRule"/>
</dbReference>
<dbReference type="GO" id="GO:0008360">
    <property type="term" value="P:regulation of cell shape"/>
    <property type="evidence" value="ECO:0007669"/>
    <property type="project" value="UniProtKB-KW"/>
</dbReference>
<dbReference type="CDD" id="cd06852">
    <property type="entry name" value="GT_MraY"/>
    <property type="match status" value="1"/>
</dbReference>
<dbReference type="HAMAP" id="MF_00038">
    <property type="entry name" value="MraY"/>
    <property type="match status" value="1"/>
</dbReference>
<dbReference type="InterPro" id="IPR000715">
    <property type="entry name" value="Glycosyl_transferase_4"/>
</dbReference>
<dbReference type="InterPro" id="IPR003524">
    <property type="entry name" value="PNAcMuramoyl-5peptid_Trfase"/>
</dbReference>
<dbReference type="InterPro" id="IPR018480">
    <property type="entry name" value="PNAcMuramoyl-5peptid_Trfase_CS"/>
</dbReference>
<dbReference type="NCBIfam" id="TIGR00445">
    <property type="entry name" value="mraY"/>
    <property type="match status" value="1"/>
</dbReference>
<dbReference type="PANTHER" id="PTHR22926">
    <property type="entry name" value="PHOSPHO-N-ACETYLMURAMOYL-PENTAPEPTIDE-TRANSFERASE"/>
    <property type="match status" value="1"/>
</dbReference>
<dbReference type="PANTHER" id="PTHR22926:SF5">
    <property type="entry name" value="PHOSPHO-N-ACETYLMURAMOYL-PENTAPEPTIDE-TRANSFERASE HOMOLOG"/>
    <property type="match status" value="1"/>
</dbReference>
<dbReference type="Pfam" id="PF00953">
    <property type="entry name" value="Glycos_transf_4"/>
    <property type="match status" value="1"/>
</dbReference>
<dbReference type="PROSITE" id="PS01347">
    <property type="entry name" value="MRAY_1"/>
    <property type="match status" value="1"/>
</dbReference>
<dbReference type="PROSITE" id="PS01348">
    <property type="entry name" value="MRAY_2"/>
    <property type="match status" value="1"/>
</dbReference>